<comment type="function">
    <text evidence="9">Hydrolyzes linear guanidino acids to form urea and the corresponding amines. Displays specificity for substrates having a negatively charged head group and short chains including taurocyamine, guanidino propanoic and butanoic acids. May protect cells by detoxifying potentially harmful amounts of guanidino acids. Metabolizes L-arginine with low efficiency.</text>
</comment>
<comment type="catalytic activity">
    <reaction evidence="9">
        <text>3-guanidinopropanoate + H2O = urea + beta-alanine</text>
        <dbReference type="Rhea" id="RHEA:16029"/>
        <dbReference type="ChEBI" id="CHEBI:15377"/>
        <dbReference type="ChEBI" id="CHEBI:16199"/>
        <dbReference type="ChEBI" id="CHEBI:57593"/>
        <dbReference type="ChEBI" id="CHEBI:57966"/>
        <dbReference type="EC" id="3.5.3.17"/>
    </reaction>
    <physiologicalReaction direction="left-to-right" evidence="12">
        <dbReference type="Rhea" id="RHEA:16030"/>
    </physiologicalReaction>
</comment>
<comment type="catalytic activity">
    <reaction evidence="9">
        <text>4-guanidinobutanoate + H2O = urea + 4-aminobutanoate</text>
        <dbReference type="Rhea" id="RHEA:19501"/>
        <dbReference type="ChEBI" id="CHEBI:15377"/>
        <dbReference type="ChEBI" id="CHEBI:16199"/>
        <dbReference type="ChEBI" id="CHEBI:57486"/>
        <dbReference type="ChEBI" id="CHEBI:59888"/>
        <dbReference type="EC" id="3.5.3.7"/>
    </reaction>
    <physiologicalReaction direction="left-to-right" evidence="12">
        <dbReference type="Rhea" id="RHEA:19502"/>
    </physiologicalReaction>
</comment>
<comment type="catalytic activity">
    <reaction evidence="9">
        <text>taurocyamine + H2O = urea + taurine</text>
        <dbReference type="Rhea" id="RHEA:75931"/>
        <dbReference type="ChEBI" id="CHEBI:15377"/>
        <dbReference type="ChEBI" id="CHEBI:16199"/>
        <dbReference type="ChEBI" id="CHEBI:58064"/>
        <dbReference type="ChEBI" id="CHEBI:507393"/>
        <dbReference type="EC" id="3.5.3.17"/>
    </reaction>
    <physiologicalReaction direction="left-to-right" evidence="12">
        <dbReference type="Rhea" id="RHEA:75932"/>
    </physiologicalReaction>
</comment>
<comment type="catalytic activity">
    <reaction evidence="9">
        <text>L-arginine + H2O = urea + L-ornithine</text>
        <dbReference type="Rhea" id="RHEA:20569"/>
        <dbReference type="ChEBI" id="CHEBI:15377"/>
        <dbReference type="ChEBI" id="CHEBI:16199"/>
        <dbReference type="ChEBI" id="CHEBI:32682"/>
        <dbReference type="ChEBI" id="CHEBI:46911"/>
        <dbReference type="EC" id="3.5.3.1"/>
    </reaction>
    <physiologicalReaction direction="left-to-right" evidence="12">
        <dbReference type="Rhea" id="RHEA:20570"/>
    </physiologicalReaction>
</comment>
<comment type="cofactor">
    <cofactor evidence="3 9">
        <name>Mn(2+)</name>
        <dbReference type="ChEBI" id="CHEBI:29035"/>
    </cofactor>
</comment>
<comment type="biophysicochemical properties">
    <phDependence>
        <text evidence="9">Optimum pH is 10.</text>
    </phDependence>
    <temperatureDependence>
        <text evidence="9">Optimum temperature is 67 degrees Celsius.</text>
    </temperatureDependence>
</comment>
<comment type="pathway">
    <text evidence="12">Nitrogen metabolism; urea cycle; L-ornithine and urea from L-arginine: step 1/1.</text>
</comment>
<comment type="interaction">
    <interactant intactId="EBI-11910382">
        <id>Q9BSE5</id>
    </interactant>
    <interactant intactId="EBI-8646694">
        <id>O43602</id>
        <label>DCX</label>
    </interactant>
    <organismsDiffer>false</organismsDiffer>
    <experiments>2</experiments>
</comment>
<comment type="subcellular location">
    <subcellularLocation>
        <location evidence="2">Mitochondrion</location>
    </subcellularLocation>
</comment>
<comment type="tissue specificity">
    <text evidence="5 6">Highly expressed in liver and kidney. Also found in skeletal muscle, fetal liver, brain, testis, skin and the gastrointestinal tract. Within brain, expression is higher in the cerebral cortex with lower levels in the medulla and spinal cord.</text>
</comment>
<comment type="similarity">
    <text evidence="3">Belongs to the ureohydrolase superfamily. Arginase family.</text>
</comment>
<comment type="caution">
    <text evidence="5 6 9">Initially proposed to function as agmatinase but this activity was not proved when using the purified enzyme. A recent study showed that it rather functions as a guanidino acid hydrolase.</text>
</comment>
<proteinExistence type="evidence at protein level"/>
<keyword id="KW-0007">Acetylation</keyword>
<keyword id="KW-0056">Arginine metabolism</keyword>
<keyword id="KW-0378">Hydrolase</keyword>
<keyword id="KW-0464">Manganese</keyword>
<keyword id="KW-0479">Metal-binding</keyword>
<keyword id="KW-0496">Mitochondrion</keyword>
<keyword id="KW-1267">Proteomics identification</keyword>
<keyword id="KW-1185">Reference proteome</keyword>
<keyword id="KW-0809">Transit peptide</keyword>
<protein>
    <recommendedName>
        <fullName evidence="10">Guanidino acid hydrolase, mitochondrial</fullName>
        <ecNumber evidence="9">3.5.3.-</ecNumber>
    </recommendedName>
    <alternativeName>
        <fullName>Arginase, mitochondrial</fullName>
        <ecNumber evidence="9">3.5.3.1</ecNumber>
    </alternativeName>
    <alternativeName>
        <fullName>Guanidinobutyrase, mitochondrial</fullName>
        <ecNumber evidence="9">3.5.3.7</ecNumber>
    </alternativeName>
    <alternativeName>
        <fullName>Guanidinopropionase, mitochondrial</fullName>
        <ecNumber evidence="9">3.5.3.17</ecNumber>
    </alternativeName>
</protein>
<organism>
    <name type="scientific">Homo sapiens</name>
    <name type="common">Human</name>
    <dbReference type="NCBI Taxonomy" id="9606"/>
    <lineage>
        <taxon>Eukaryota</taxon>
        <taxon>Metazoa</taxon>
        <taxon>Chordata</taxon>
        <taxon>Craniata</taxon>
        <taxon>Vertebrata</taxon>
        <taxon>Euteleostomi</taxon>
        <taxon>Mammalia</taxon>
        <taxon>Eutheria</taxon>
        <taxon>Euarchontoglires</taxon>
        <taxon>Primates</taxon>
        <taxon>Haplorrhini</taxon>
        <taxon>Catarrhini</taxon>
        <taxon>Hominidae</taxon>
        <taxon>Homo</taxon>
    </lineage>
</organism>
<dbReference type="EC" id="3.5.3.-" evidence="9"/>
<dbReference type="EC" id="3.5.3.1" evidence="9"/>
<dbReference type="EC" id="3.5.3.7" evidence="9"/>
<dbReference type="EC" id="3.5.3.17" evidence="9"/>
<dbReference type="EMBL" id="AY057097">
    <property type="protein sequence ID" value="AAL24446.1"/>
    <property type="molecule type" value="mRNA"/>
</dbReference>
<dbReference type="EMBL" id="AK027037">
    <property type="protein sequence ID" value="BAB15633.1"/>
    <property type="molecule type" value="mRNA"/>
</dbReference>
<dbReference type="EMBL" id="AL121992">
    <property type="status" value="NOT_ANNOTATED_CDS"/>
    <property type="molecule type" value="Genomic_DNA"/>
</dbReference>
<dbReference type="EMBL" id="BC005090">
    <property type="protein sequence ID" value="AAH05090.1"/>
    <property type="molecule type" value="mRNA"/>
</dbReference>
<dbReference type="CCDS" id="CCDS160.1"/>
<dbReference type="RefSeq" id="NP_079034.3">
    <property type="nucleotide sequence ID" value="NM_024758.4"/>
</dbReference>
<dbReference type="SMR" id="Q9BSE5"/>
<dbReference type="BioGRID" id="122909">
    <property type="interactions" value="52"/>
</dbReference>
<dbReference type="FunCoup" id="Q9BSE5">
    <property type="interactions" value="486"/>
</dbReference>
<dbReference type="IntAct" id="Q9BSE5">
    <property type="interactions" value="20"/>
</dbReference>
<dbReference type="STRING" id="9606.ENSP00000364986"/>
<dbReference type="iPTMnet" id="Q9BSE5"/>
<dbReference type="PhosphoSitePlus" id="Q9BSE5"/>
<dbReference type="SwissPalm" id="Q9BSE5"/>
<dbReference type="BioMuta" id="AGMAT"/>
<dbReference type="DMDM" id="126302602"/>
<dbReference type="jPOST" id="Q9BSE5"/>
<dbReference type="MassIVE" id="Q9BSE5"/>
<dbReference type="PaxDb" id="9606-ENSP00000364986"/>
<dbReference type="PeptideAtlas" id="Q9BSE5"/>
<dbReference type="ProteomicsDB" id="78882"/>
<dbReference type="Pumba" id="Q9BSE5"/>
<dbReference type="Antibodypedia" id="14379">
    <property type="antibodies" value="92 antibodies from 20 providers"/>
</dbReference>
<dbReference type="DNASU" id="79814"/>
<dbReference type="Ensembl" id="ENST00000375826.4">
    <property type="protein sequence ID" value="ENSP00000364986.3"/>
    <property type="gene ID" value="ENSG00000116771.6"/>
</dbReference>
<dbReference type="GeneID" id="79814"/>
<dbReference type="KEGG" id="hsa:79814"/>
<dbReference type="MANE-Select" id="ENST00000375826.4">
    <property type="protein sequence ID" value="ENSP00000364986.3"/>
    <property type="RefSeq nucleotide sequence ID" value="NM_024758.5"/>
    <property type="RefSeq protein sequence ID" value="NP_079034.3"/>
</dbReference>
<dbReference type="UCSC" id="uc001awv.3">
    <property type="organism name" value="human"/>
</dbReference>
<dbReference type="AGR" id="HGNC:18407"/>
<dbReference type="CTD" id="79814"/>
<dbReference type="DisGeNET" id="79814"/>
<dbReference type="GeneCards" id="AGMAT"/>
<dbReference type="HGNC" id="HGNC:18407">
    <property type="gene designation" value="AGMAT"/>
</dbReference>
<dbReference type="HPA" id="ENSG00000116771">
    <property type="expression patterns" value="Group enriched (kidney, liver, skeletal muscle)"/>
</dbReference>
<dbReference type="MIM" id="617887">
    <property type="type" value="gene"/>
</dbReference>
<dbReference type="neXtProt" id="NX_Q9BSE5"/>
<dbReference type="OpenTargets" id="ENSG00000116771"/>
<dbReference type="PharmGKB" id="PA24619"/>
<dbReference type="VEuPathDB" id="HostDB:ENSG00000116771"/>
<dbReference type="eggNOG" id="KOG2964">
    <property type="taxonomic scope" value="Eukaryota"/>
</dbReference>
<dbReference type="GeneTree" id="ENSGT00950000183195"/>
<dbReference type="HOGENOM" id="CLU_039478_0_0_1"/>
<dbReference type="InParanoid" id="Q9BSE5"/>
<dbReference type="OMA" id="YELTTIM"/>
<dbReference type="OrthoDB" id="9992747at2759"/>
<dbReference type="PAN-GO" id="Q9BSE5">
    <property type="GO annotations" value="2 GO annotations based on evolutionary models"/>
</dbReference>
<dbReference type="PhylomeDB" id="Q9BSE5"/>
<dbReference type="TreeFam" id="TF328612"/>
<dbReference type="BioCyc" id="MetaCyc:HS04051-MONOMER"/>
<dbReference type="BRENDA" id="3.5.3.11">
    <property type="organism ID" value="2681"/>
</dbReference>
<dbReference type="PathwayCommons" id="Q9BSE5"/>
<dbReference type="Reactome" id="R-HSA-351143">
    <property type="pathway name" value="Agmatine biosynthesis"/>
</dbReference>
<dbReference type="SignaLink" id="Q9BSE5"/>
<dbReference type="UniPathway" id="UPA00158">
    <property type="reaction ID" value="UER00270"/>
</dbReference>
<dbReference type="BioGRID-ORCS" id="79814">
    <property type="hits" value="17 hits in 1148 CRISPR screens"/>
</dbReference>
<dbReference type="ChiTaRS" id="AGMAT">
    <property type="organism name" value="human"/>
</dbReference>
<dbReference type="GeneWiki" id="Agmatinase"/>
<dbReference type="GenomeRNAi" id="79814"/>
<dbReference type="Pharos" id="Q9BSE5">
    <property type="development level" value="Tbio"/>
</dbReference>
<dbReference type="PRO" id="PR:Q9BSE5"/>
<dbReference type="Proteomes" id="UP000005640">
    <property type="component" value="Chromosome 1"/>
</dbReference>
<dbReference type="RNAct" id="Q9BSE5">
    <property type="molecule type" value="protein"/>
</dbReference>
<dbReference type="Bgee" id="ENSG00000116771">
    <property type="expression patterns" value="Expressed in renal glomerulus and 147 other cell types or tissues"/>
</dbReference>
<dbReference type="ExpressionAtlas" id="Q9BSE5">
    <property type="expression patterns" value="baseline and differential"/>
</dbReference>
<dbReference type="GO" id="GO:0005739">
    <property type="term" value="C:mitochondrion"/>
    <property type="evidence" value="ECO:0006056"/>
    <property type="project" value="FlyBase"/>
</dbReference>
<dbReference type="GO" id="GO:0008783">
    <property type="term" value="F:agmatinase activity"/>
    <property type="evidence" value="ECO:0000318"/>
    <property type="project" value="GO_Central"/>
</dbReference>
<dbReference type="GO" id="GO:0004053">
    <property type="term" value="F:arginase activity"/>
    <property type="evidence" value="ECO:0000314"/>
    <property type="project" value="UniProtKB"/>
</dbReference>
<dbReference type="GO" id="GO:0047971">
    <property type="term" value="F:guanidinobutyrase activity"/>
    <property type="evidence" value="ECO:0000314"/>
    <property type="project" value="UniProtKB"/>
</dbReference>
<dbReference type="GO" id="GO:0047972">
    <property type="term" value="F:guanidinopropionase activity"/>
    <property type="evidence" value="ECO:0000314"/>
    <property type="project" value="UniProtKB"/>
</dbReference>
<dbReference type="GO" id="GO:0046872">
    <property type="term" value="F:metal ion binding"/>
    <property type="evidence" value="ECO:0007669"/>
    <property type="project" value="UniProtKB-KW"/>
</dbReference>
<dbReference type="GO" id="GO:0097055">
    <property type="term" value="P:agmatine biosynthetic process"/>
    <property type="evidence" value="ECO:0000304"/>
    <property type="project" value="Reactome"/>
</dbReference>
<dbReference type="GO" id="GO:0033389">
    <property type="term" value="P:putrescine biosynthetic process from arginine, via agmatine"/>
    <property type="evidence" value="ECO:0000318"/>
    <property type="project" value="GO_Central"/>
</dbReference>
<dbReference type="GO" id="GO:0000050">
    <property type="term" value="P:urea cycle"/>
    <property type="evidence" value="ECO:0007669"/>
    <property type="project" value="UniProtKB-UniPathway"/>
</dbReference>
<dbReference type="CDD" id="cd11592">
    <property type="entry name" value="Agmatinase_PAH"/>
    <property type="match status" value="1"/>
</dbReference>
<dbReference type="FunFam" id="3.40.800.10:FF:000002">
    <property type="entry name" value="Agmatinase"/>
    <property type="match status" value="1"/>
</dbReference>
<dbReference type="Gene3D" id="3.40.800.10">
    <property type="entry name" value="Ureohydrolase domain"/>
    <property type="match status" value="1"/>
</dbReference>
<dbReference type="InterPro" id="IPR005925">
    <property type="entry name" value="Agmatinase-rel"/>
</dbReference>
<dbReference type="InterPro" id="IPR006035">
    <property type="entry name" value="Ureohydrolase"/>
</dbReference>
<dbReference type="InterPro" id="IPR023696">
    <property type="entry name" value="Ureohydrolase_dom_sf"/>
</dbReference>
<dbReference type="InterPro" id="IPR020855">
    <property type="entry name" value="Ureohydrolase_Mn_BS"/>
</dbReference>
<dbReference type="NCBIfam" id="TIGR01230">
    <property type="entry name" value="agmatinase"/>
    <property type="match status" value="1"/>
</dbReference>
<dbReference type="PANTHER" id="PTHR11358">
    <property type="entry name" value="ARGINASE/AGMATINASE"/>
    <property type="match status" value="1"/>
</dbReference>
<dbReference type="PANTHER" id="PTHR11358:SF26">
    <property type="entry name" value="GUANIDINO ACID HYDROLASE, MITOCHONDRIAL"/>
    <property type="match status" value="1"/>
</dbReference>
<dbReference type="Pfam" id="PF00491">
    <property type="entry name" value="Arginase"/>
    <property type="match status" value="1"/>
</dbReference>
<dbReference type="PIRSF" id="PIRSF036979">
    <property type="entry name" value="Arginase"/>
    <property type="match status" value="1"/>
</dbReference>
<dbReference type="PRINTS" id="PR00116">
    <property type="entry name" value="ARGINASE"/>
</dbReference>
<dbReference type="SUPFAM" id="SSF52768">
    <property type="entry name" value="Arginase/deacetylase"/>
    <property type="match status" value="1"/>
</dbReference>
<dbReference type="PROSITE" id="PS01053">
    <property type="entry name" value="ARGINASE_1"/>
    <property type="match status" value="1"/>
</dbReference>
<dbReference type="PROSITE" id="PS51409">
    <property type="entry name" value="ARGINASE_2"/>
    <property type="match status" value="1"/>
</dbReference>
<accession>Q9BSE5</accession>
<accession>Q5TDH1</accession>
<accession>Q9H5J3</accession>
<name>GDAH_HUMAN</name>
<sequence>MLRLLASGCARGPGPGVGARPAAGLFHPGRRQSRQASDAPRNQPPSPEFVARPVGVCSMMRLPVQTSPEGLDAAFIGVPLDTGTSNRPGARFGPRRIREESVMLGTVNPSTGALPFQSLMVADLGDVNVNLYNLQDSCRRIQEAYEKIVAAGCIPLTLGGDHTITYPILQAMAKKHGPVGLLHVDAHTDTTDKALGEKLYHGAPFRRCVDEGLLDCKRVVQIGIRGSSTTLDPYRYNRSQGFRVVLAEDCWMKSLVPLMGEVRQQMGGKPIYISFDIDALDPAYAPGTGTPEIAGLTPSQALEIIRGCQGLNVMGCDLVEVSPPYDLSGNTALLAANLLFEMLCALPKVTTV</sequence>
<reference key="1">
    <citation type="journal article" date="2002" name="Am. J. Physiol.">
        <title>Cloning of human agmatinase. An alternate path for polyamine synthesis induced in liver by hepatitis B virus.</title>
        <authorList>
            <person name="Mistry S.K."/>
            <person name="Burwell T.J."/>
            <person name="Chambers R.M."/>
            <person name="Rudolph-Owen L."/>
            <person name="Spaltmann F."/>
            <person name="Cook W.J."/>
            <person name="Morris S.M. Jr."/>
        </authorList>
    </citation>
    <scope>NUCLEOTIDE SEQUENCE [MRNA]</scope>
    <scope>TISSUE SPECIFICITY</scope>
    <scope>VARIANTS ARG-105 AND GLN-140</scope>
    <scope>CAUTION</scope>
    <source>
        <tissue>Kidney</tissue>
    </source>
</reference>
<reference key="2">
    <citation type="journal article" date="2004" name="Nat. Genet.">
        <title>Complete sequencing and characterization of 21,243 full-length human cDNAs.</title>
        <authorList>
            <person name="Ota T."/>
            <person name="Suzuki Y."/>
            <person name="Nishikawa T."/>
            <person name="Otsuki T."/>
            <person name="Sugiyama T."/>
            <person name="Irie R."/>
            <person name="Wakamatsu A."/>
            <person name="Hayashi K."/>
            <person name="Sato H."/>
            <person name="Nagai K."/>
            <person name="Kimura K."/>
            <person name="Makita H."/>
            <person name="Sekine M."/>
            <person name="Obayashi M."/>
            <person name="Nishi T."/>
            <person name="Shibahara T."/>
            <person name="Tanaka T."/>
            <person name="Ishii S."/>
            <person name="Yamamoto J."/>
            <person name="Saito K."/>
            <person name="Kawai Y."/>
            <person name="Isono Y."/>
            <person name="Nakamura Y."/>
            <person name="Nagahari K."/>
            <person name="Murakami K."/>
            <person name="Yasuda T."/>
            <person name="Iwayanagi T."/>
            <person name="Wagatsuma M."/>
            <person name="Shiratori A."/>
            <person name="Sudo H."/>
            <person name="Hosoiri T."/>
            <person name="Kaku Y."/>
            <person name="Kodaira H."/>
            <person name="Kondo H."/>
            <person name="Sugawara M."/>
            <person name="Takahashi M."/>
            <person name="Kanda K."/>
            <person name="Yokoi T."/>
            <person name="Furuya T."/>
            <person name="Kikkawa E."/>
            <person name="Omura Y."/>
            <person name="Abe K."/>
            <person name="Kamihara K."/>
            <person name="Katsuta N."/>
            <person name="Sato K."/>
            <person name="Tanikawa M."/>
            <person name="Yamazaki M."/>
            <person name="Ninomiya K."/>
            <person name="Ishibashi T."/>
            <person name="Yamashita H."/>
            <person name="Murakawa K."/>
            <person name="Fujimori K."/>
            <person name="Tanai H."/>
            <person name="Kimata M."/>
            <person name="Watanabe M."/>
            <person name="Hiraoka S."/>
            <person name="Chiba Y."/>
            <person name="Ishida S."/>
            <person name="Ono Y."/>
            <person name="Takiguchi S."/>
            <person name="Watanabe S."/>
            <person name="Yosida M."/>
            <person name="Hotuta T."/>
            <person name="Kusano J."/>
            <person name="Kanehori K."/>
            <person name="Takahashi-Fujii A."/>
            <person name="Hara H."/>
            <person name="Tanase T.-O."/>
            <person name="Nomura Y."/>
            <person name="Togiya S."/>
            <person name="Komai F."/>
            <person name="Hara R."/>
            <person name="Takeuchi K."/>
            <person name="Arita M."/>
            <person name="Imose N."/>
            <person name="Musashino K."/>
            <person name="Yuuki H."/>
            <person name="Oshima A."/>
            <person name="Sasaki N."/>
            <person name="Aotsuka S."/>
            <person name="Yoshikawa Y."/>
            <person name="Matsunawa H."/>
            <person name="Ichihara T."/>
            <person name="Shiohata N."/>
            <person name="Sano S."/>
            <person name="Moriya S."/>
            <person name="Momiyama H."/>
            <person name="Satoh N."/>
            <person name="Takami S."/>
            <person name="Terashima Y."/>
            <person name="Suzuki O."/>
            <person name="Nakagawa S."/>
            <person name="Senoh A."/>
            <person name="Mizoguchi H."/>
            <person name="Goto Y."/>
            <person name="Shimizu F."/>
            <person name="Wakebe H."/>
            <person name="Hishigaki H."/>
            <person name="Watanabe T."/>
            <person name="Sugiyama A."/>
            <person name="Takemoto M."/>
            <person name="Kawakami B."/>
            <person name="Yamazaki M."/>
            <person name="Watanabe K."/>
            <person name="Kumagai A."/>
            <person name="Itakura S."/>
            <person name="Fukuzumi Y."/>
            <person name="Fujimori Y."/>
            <person name="Komiyama M."/>
            <person name="Tashiro H."/>
            <person name="Tanigami A."/>
            <person name="Fujiwara T."/>
            <person name="Ono T."/>
            <person name="Yamada K."/>
            <person name="Fujii Y."/>
            <person name="Ozaki K."/>
            <person name="Hirao M."/>
            <person name="Ohmori Y."/>
            <person name="Kawabata A."/>
            <person name="Hikiji T."/>
            <person name="Kobatake N."/>
            <person name="Inagaki H."/>
            <person name="Ikema Y."/>
            <person name="Okamoto S."/>
            <person name="Okitani R."/>
            <person name="Kawakami T."/>
            <person name="Noguchi S."/>
            <person name="Itoh T."/>
            <person name="Shigeta K."/>
            <person name="Senba T."/>
            <person name="Matsumura K."/>
            <person name="Nakajima Y."/>
            <person name="Mizuno T."/>
            <person name="Morinaga M."/>
            <person name="Sasaki M."/>
            <person name="Togashi T."/>
            <person name="Oyama M."/>
            <person name="Hata H."/>
            <person name="Watanabe M."/>
            <person name="Komatsu T."/>
            <person name="Mizushima-Sugano J."/>
            <person name="Satoh T."/>
            <person name="Shirai Y."/>
            <person name="Takahashi Y."/>
            <person name="Nakagawa K."/>
            <person name="Okumura K."/>
            <person name="Nagase T."/>
            <person name="Nomura N."/>
            <person name="Kikuchi H."/>
            <person name="Masuho Y."/>
            <person name="Yamashita R."/>
            <person name="Nakai K."/>
            <person name="Yada T."/>
            <person name="Nakamura Y."/>
            <person name="Ohara O."/>
            <person name="Isogai T."/>
            <person name="Sugano S."/>
        </authorList>
    </citation>
    <scope>NUCLEOTIDE SEQUENCE [LARGE SCALE MRNA]</scope>
    <scope>VARIANT ARG-105</scope>
</reference>
<reference key="3">
    <citation type="journal article" date="2006" name="Nature">
        <title>The DNA sequence and biological annotation of human chromosome 1.</title>
        <authorList>
            <person name="Gregory S.G."/>
            <person name="Barlow K.F."/>
            <person name="McLay K.E."/>
            <person name="Kaul R."/>
            <person name="Swarbreck D."/>
            <person name="Dunham A."/>
            <person name="Scott C.E."/>
            <person name="Howe K.L."/>
            <person name="Woodfine K."/>
            <person name="Spencer C.C.A."/>
            <person name="Jones M.C."/>
            <person name="Gillson C."/>
            <person name="Searle S."/>
            <person name="Zhou Y."/>
            <person name="Kokocinski F."/>
            <person name="McDonald L."/>
            <person name="Evans R."/>
            <person name="Phillips K."/>
            <person name="Atkinson A."/>
            <person name="Cooper R."/>
            <person name="Jones C."/>
            <person name="Hall R.E."/>
            <person name="Andrews T.D."/>
            <person name="Lloyd C."/>
            <person name="Ainscough R."/>
            <person name="Almeida J.P."/>
            <person name="Ambrose K.D."/>
            <person name="Anderson F."/>
            <person name="Andrew R.W."/>
            <person name="Ashwell R.I.S."/>
            <person name="Aubin K."/>
            <person name="Babbage A.K."/>
            <person name="Bagguley C.L."/>
            <person name="Bailey J."/>
            <person name="Beasley H."/>
            <person name="Bethel G."/>
            <person name="Bird C.P."/>
            <person name="Bray-Allen S."/>
            <person name="Brown J.Y."/>
            <person name="Brown A.J."/>
            <person name="Buckley D."/>
            <person name="Burton J."/>
            <person name="Bye J."/>
            <person name="Carder C."/>
            <person name="Chapman J.C."/>
            <person name="Clark S.Y."/>
            <person name="Clarke G."/>
            <person name="Clee C."/>
            <person name="Cobley V."/>
            <person name="Collier R.E."/>
            <person name="Corby N."/>
            <person name="Coville G.J."/>
            <person name="Davies J."/>
            <person name="Deadman R."/>
            <person name="Dunn M."/>
            <person name="Earthrowl M."/>
            <person name="Ellington A.G."/>
            <person name="Errington H."/>
            <person name="Frankish A."/>
            <person name="Frankland J."/>
            <person name="French L."/>
            <person name="Garner P."/>
            <person name="Garnett J."/>
            <person name="Gay L."/>
            <person name="Ghori M.R.J."/>
            <person name="Gibson R."/>
            <person name="Gilby L.M."/>
            <person name="Gillett W."/>
            <person name="Glithero R.J."/>
            <person name="Grafham D.V."/>
            <person name="Griffiths C."/>
            <person name="Griffiths-Jones S."/>
            <person name="Grocock R."/>
            <person name="Hammond S."/>
            <person name="Harrison E.S.I."/>
            <person name="Hart E."/>
            <person name="Haugen E."/>
            <person name="Heath P.D."/>
            <person name="Holmes S."/>
            <person name="Holt K."/>
            <person name="Howden P.J."/>
            <person name="Hunt A.R."/>
            <person name="Hunt S.E."/>
            <person name="Hunter G."/>
            <person name="Isherwood J."/>
            <person name="James R."/>
            <person name="Johnson C."/>
            <person name="Johnson D."/>
            <person name="Joy A."/>
            <person name="Kay M."/>
            <person name="Kershaw J.K."/>
            <person name="Kibukawa M."/>
            <person name="Kimberley A.M."/>
            <person name="King A."/>
            <person name="Knights A.J."/>
            <person name="Lad H."/>
            <person name="Laird G."/>
            <person name="Lawlor S."/>
            <person name="Leongamornlert D.A."/>
            <person name="Lloyd D.M."/>
            <person name="Loveland J."/>
            <person name="Lovell J."/>
            <person name="Lush M.J."/>
            <person name="Lyne R."/>
            <person name="Martin S."/>
            <person name="Mashreghi-Mohammadi M."/>
            <person name="Matthews L."/>
            <person name="Matthews N.S.W."/>
            <person name="McLaren S."/>
            <person name="Milne S."/>
            <person name="Mistry S."/>
            <person name="Moore M.J.F."/>
            <person name="Nickerson T."/>
            <person name="O'Dell C.N."/>
            <person name="Oliver K."/>
            <person name="Palmeiri A."/>
            <person name="Palmer S.A."/>
            <person name="Parker A."/>
            <person name="Patel D."/>
            <person name="Pearce A.V."/>
            <person name="Peck A.I."/>
            <person name="Pelan S."/>
            <person name="Phelps K."/>
            <person name="Phillimore B.J."/>
            <person name="Plumb R."/>
            <person name="Rajan J."/>
            <person name="Raymond C."/>
            <person name="Rouse G."/>
            <person name="Saenphimmachak C."/>
            <person name="Sehra H.K."/>
            <person name="Sheridan E."/>
            <person name="Shownkeen R."/>
            <person name="Sims S."/>
            <person name="Skuce C.D."/>
            <person name="Smith M."/>
            <person name="Steward C."/>
            <person name="Subramanian S."/>
            <person name="Sycamore N."/>
            <person name="Tracey A."/>
            <person name="Tromans A."/>
            <person name="Van Helmond Z."/>
            <person name="Wall M."/>
            <person name="Wallis J.M."/>
            <person name="White S."/>
            <person name="Whitehead S.L."/>
            <person name="Wilkinson J.E."/>
            <person name="Willey D.L."/>
            <person name="Williams H."/>
            <person name="Wilming L."/>
            <person name="Wray P.W."/>
            <person name="Wu Z."/>
            <person name="Coulson A."/>
            <person name="Vaudin M."/>
            <person name="Sulston J.E."/>
            <person name="Durbin R.M."/>
            <person name="Hubbard T."/>
            <person name="Wooster R."/>
            <person name="Dunham I."/>
            <person name="Carter N.P."/>
            <person name="McVean G."/>
            <person name="Ross M.T."/>
            <person name="Harrow J."/>
            <person name="Olson M.V."/>
            <person name="Beck S."/>
            <person name="Rogers J."/>
            <person name="Bentley D.R."/>
        </authorList>
    </citation>
    <scope>NUCLEOTIDE SEQUENCE [LARGE SCALE GENOMIC DNA]</scope>
</reference>
<reference key="4">
    <citation type="journal article" date="2004" name="Genome Res.">
        <title>The status, quality, and expansion of the NIH full-length cDNA project: the Mammalian Gene Collection (MGC).</title>
        <authorList>
            <consortium name="The MGC Project Team"/>
        </authorList>
    </citation>
    <scope>NUCLEOTIDE SEQUENCE [LARGE SCALE MRNA]</scope>
    <scope>VARIANT ARG-105</scope>
    <source>
        <tissue>Ovary</tissue>
    </source>
</reference>
<reference key="5">
    <citation type="journal article" date="2002" name="Mol. Genet. Metab.">
        <title>Cloning and characterization of human agmatinase.</title>
        <authorList>
            <person name="Iyer R.K."/>
            <person name="Kim H.K."/>
            <person name="Tsoa R.W."/>
            <person name="Grody W.W."/>
            <person name="Cederbaum S.D."/>
        </authorList>
    </citation>
    <scope>TISSUE SPECIFICITY</scope>
    <scope>CAUTION</scope>
</reference>
<reference key="6">
    <citation type="journal article" date="2011" name="BMC Syst. Biol.">
        <title>Initial characterization of the human central proteome.</title>
        <authorList>
            <person name="Burkard T.R."/>
            <person name="Planyavsky M."/>
            <person name="Kaupe I."/>
            <person name="Breitwieser F.P."/>
            <person name="Buerckstuemmer T."/>
            <person name="Bennett K.L."/>
            <person name="Superti-Furga G."/>
            <person name="Colinge J."/>
        </authorList>
    </citation>
    <scope>IDENTIFICATION BY MASS SPECTROMETRY [LARGE SCALE ANALYSIS]</scope>
</reference>
<reference key="7">
    <citation type="journal article" date="2014" name="J. Proteomics">
        <title>An enzyme assisted RP-RPLC approach for in-depth analysis of human liver phosphoproteome.</title>
        <authorList>
            <person name="Bian Y."/>
            <person name="Song C."/>
            <person name="Cheng K."/>
            <person name="Dong M."/>
            <person name="Wang F."/>
            <person name="Huang J."/>
            <person name="Sun D."/>
            <person name="Wang L."/>
            <person name="Ye M."/>
            <person name="Zou H."/>
        </authorList>
    </citation>
    <scope>IDENTIFICATION BY MASS SPECTROMETRY [LARGE SCALE ANALYSIS]</scope>
    <source>
        <tissue>Liver</tissue>
    </source>
</reference>
<reference key="8">
    <citation type="journal article" date="2022" name="Sci. Rep.">
        <title>Guanidino acid hydrolysis by the human enzyme annotated as agmatinase.</title>
        <authorList>
            <person name="Sinn M."/>
            <person name="Stanoppi M."/>
            <person name="Hauth F."/>
            <person name="Fleming J.R."/>
            <person name="Funck D."/>
            <person name="Mayans O."/>
            <person name="Hartig J.S."/>
        </authorList>
    </citation>
    <scope>FUNCTION</scope>
    <scope>CATALYTIC ACTIVITY</scope>
    <scope>COFACTOR</scope>
    <scope>BIOPHYSICOCHEMICAL PROPERTIES</scope>
    <scope>PATHWAY</scope>
    <scope>CHARACTERIZATION OF VARIANT ARG-105</scope>
    <scope>CAUTION</scope>
</reference>
<feature type="transit peptide" description="Mitochondrion" evidence="2">
    <location>
        <begin position="1"/>
        <end position="35"/>
    </location>
</feature>
<feature type="chain" id="PRO_0000002089" description="Guanidino acid hydrolase, mitochondrial">
    <location>
        <begin position="36"/>
        <end position="352"/>
    </location>
</feature>
<feature type="region of interest" description="Disordered" evidence="4">
    <location>
        <begin position="11"/>
        <end position="49"/>
    </location>
</feature>
<feature type="binding site" evidence="3">
    <location>
        <position position="162"/>
    </location>
    <ligand>
        <name>Mn(2+)</name>
        <dbReference type="ChEBI" id="CHEBI:29035"/>
        <label>1</label>
    </ligand>
</feature>
<feature type="binding site" evidence="3">
    <location>
        <position position="185"/>
    </location>
    <ligand>
        <name>Mn(2+)</name>
        <dbReference type="ChEBI" id="CHEBI:29035"/>
        <label>1</label>
    </ligand>
</feature>
<feature type="binding site" evidence="3">
    <location>
        <position position="185"/>
    </location>
    <ligand>
        <name>Mn(2+)</name>
        <dbReference type="ChEBI" id="CHEBI:29035"/>
        <label>2</label>
    </ligand>
</feature>
<feature type="binding site" evidence="3">
    <location>
        <position position="187"/>
    </location>
    <ligand>
        <name>Mn(2+)</name>
        <dbReference type="ChEBI" id="CHEBI:29035"/>
        <label>2</label>
    </ligand>
</feature>
<feature type="binding site" evidence="3">
    <location>
        <position position="189"/>
    </location>
    <ligand>
        <name>Mn(2+)</name>
        <dbReference type="ChEBI" id="CHEBI:29035"/>
        <label>1</label>
    </ligand>
</feature>
<feature type="binding site" evidence="3">
    <location>
        <position position="276"/>
    </location>
    <ligand>
        <name>Mn(2+)</name>
        <dbReference type="ChEBI" id="CHEBI:29035"/>
        <label>1</label>
    </ligand>
</feature>
<feature type="binding site" evidence="3">
    <location>
        <position position="276"/>
    </location>
    <ligand>
        <name>Mn(2+)</name>
        <dbReference type="ChEBI" id="CHEBI:29035"/>
        <label>2</label>
    </ligand>
</feature>
<feature type="binding site" evidence="3">
    <location>
        <position position="278"/>
    </location>
    <ligand>
        <name>Mn(2+)</name>
        <dbReference type="ChEBI" id="CHEBI:29035"/>
        <label>2</label>
    </ligand>
</feature>
<feature type="modified residue" description="N6-acetyllysine" evidence="1">
    <location>
        <position position="193"/>
    </location>
</feature>
<feature type="modified residue" description="N6-acetyllysine; alternate" evidence="1">
    <location>
        <position position="217"/>
    </location>
</feature>
<feature type="modified residue" description="N6-succinyllysine; alternate" evidence="1">
    <location>
        <position position="217"/>
    </location>
</feature>
<feature type="sequence variant" id="VAR_023485" description="Increased guanidino hydrolase activity toward taurocyamine; can hydrolyze guanidinopropanoate with low efficiency; inactive toward L-arginine; dbSNP:rs6429757." evidence="5 7 8 9">
    <original>G</original>
    <variation>R</variation>
    <location>
        <position position="105"/>
    </location>
</feature>
<feature type="sequence variant" id="VAR_048332" description="In dbSNP:rs11580170." evidence="5">
    <original>R</original>
    <variation>Q</variation>
    <location>
        <position position="140"/>
    </location>
</feature>
<feature type="sequence conflict" description="In Ref. 2; BAB15633." evidence="11" ref="2">
    <original>Y</original>
    <variation>C</variation>
    <location>
        <position position="145"/>
    </location>
</feature>
<gene>
    <name type="primary">AGMAT</name>
    <name evidence="10" type="synonym">GDAH</name>
</gene>
<evidence type="ECO:0000250" key="1">
    <source>
        <dbReference type="UniProtKB" id="A2AS89"/>
    </source>
</evidence>
<evidence type="ECO:0000255" key="2"/>
<evidence type="ECO:0000255" key="3">
    <source>
        <dbReference type="PROSITE-ProRule" id="PRU00742"/>
    </source>
</evidence>
<evidence type="ECO:0000256" key="4">
    <source>
        <dbReference type="SAM" id="MobiDB-lite"/>
    </source>
</evidence>
<evidence type="ECO:0000269" key="5">
    <source>
    </source>
</evidence>
<evidence type="ECO:0000269" key="6">
    <source>
    </source>
</evidence>
<evidence type="ECO:0000269" key="7">
    <source>
    </source>
</evidence>
<evidence type="ECO:0000269" key="8">
    <source>
    </source>
</evidence>
<evidence type="ECO:0000269" key="9">
    <source>
    </source>
</evidence>
<evidence type="ECO:0000303" key="10">
    <source>
    </source>
</evidence>
<evidence type="ECO:0000305" key="11"/>
<evidence type="ECO:0000305" key="12">
    <source>
    </source>
</evidence>